<proteinExistence type="inferred from homology"/>
<gene>
    <name type="primary">thrC</name>
    <name type="ordered locus">jhp_0090</name>
</gene>
<sequence length="486" mass="54654">MPFVPTRSLKERKIDFIEAVLNPNAPKGGLYTLEHFETLEWQDCLGMSYSELVEHVFELLNLEIPKNLLASALKRYENFDNPKNPAPIFALNERLFVQELYHGPSLAFKDMALQPLASLFSNLAVGKNEKYLVLVSTSGDTGPATLEGLAGMPNVFVVCLYPKDGTSLVQKLQMVTQNASNLKVFGVSGDFDDAQNALKNLLKDDDFNEALKARQLKLSVANSVNFGRIAFQIVYHIWGFLELYKKGAINSKEKITLAIPSGNFGNALGAFYAKKMGLNIAKIKVVTNSNDVLREFIETGRYDLTKRSLKQTFSPAMDILKSSNVERALFSLFGFERTLELMQALEEEKFYALKPKELALLQEHFSCASCSDEDCLKTIQEVYAEHQYLIDPHTATALNASLKTHEKTLVSATASYEKFPKTTLLALNEQKKNDDDKAALETLKNSYNTPDSQRLDDLFERGIKHQEVLKLNEIKSSILLWLENTH</sequence>
<protein>
    <recommendedName>
        <fullName>Threonine synthase</fullName>
        <shortName>TS</shortName>
        <ecNumber>4.2.3.1</ecNumber>
    </recommendedName>
</protein>
<dbReference type="EC" id="4.2.3.1"/>
<dbReference type="EMBL" id="AE001439">
    <property type="protein sequence ID" value="AAD05671.1"/>
    <property type="molecule type" value="Genomic_DNA"/>
</dbReference>
<dbReference type="PIR" id="A71975">
    <property type="entry name" value="A71975"/>
</dbReference>
<dbReference type="RefSeq" id="WP_001117379.1">
    <property type="nucleotide sequence ID" value="NC_000921.1"/>
</dbReference>
<dbReference type="SMR" id="Q9ZMX5"/>
<dbReference type="KEGG" id="hpj:jhp_0090"/>
<dbReference type="PATRIC" id="fig|85963.30.peg.940"/>
<dbReference type="eggNOG" id="COG0498">
    <property type="taxonomic scope" value="Bacteria"/>
</dbReference>
<dbReference type="UniPathway" id="UPA00050">
    <property type="reaction ID" value="UER00065"/>
</dbReference>
<dbReference type="Proteomes" id="UP000000804">
    <property type="component" value="Chromosome"/>
</dbReference>
<dbReference type="GO" id="GO:0005737">
    <property type="term" value="C:cytoplasm"/>
    <property type="evidence" value="ECO:0007669"/>
    <property type="project" value="TreeGrafter"/>
</dbReference>
<dbReference type="GO" id="GO:0030170">
    <property type="term" value="F:pyridoxal phosphate binding"/>
    <property type="evidence" value="ECO:0007669"/>
    <property type="project" value="InterPro"/>
</dbReference>
<dbReference type="GO" id="GO:0004795">
    <property type="term" value="F:threonine synthase activity"/>
    <property type="evidence" value="ECO:0007669"/>
    <property type="project" value="UniProtKB-EC"/>
</dbReference>
<dbReference type="GO" id="GO:0009088">
    <property type="term" value="P:threonine biosynthetic process"/>
    <property type="evidence" value="ECO:0007669"/>
    <property type="project" value="UniProtKB-UniPathway"/>
</dbReference>
<dbReference type="CDD" id="cd01560">
    <property type="entry name" value="Thr-synth_2"/>
    <property type="match status" value="1"/>
</dbReference>
<dbReference type="Gene3D" id="3.40.50.1100">
    <property type="match status" value="2"/>
</dbReference>
<dbReference type="Gene3D" id="3.90.1380.10">
    <property type="entry name" value="Threonine synthase, N-terminal domain"/>
    <property type="match status" value="1"/>
</dbReference>
<dbReference type="InterPro" id="IPR000634">
    <property type="entry name" value="Ser/Thr_deHydtase_PyrdxlP-BS"/>
</dbReference>
<dbReference type="InterPro" id="IPR037158">
    <property type="entry name" value="Thr_synth_N_sf"/>
</dbReference>
<dbReference type="InterPro" id="IPR004450">
    <property type="entry name" value="Thr_synthase-like"/>
</dbReference>
<dbReference type="InterPro" id="IPR001926">
    <property type="entry name" value="TrpB-like_PALP"/>
</dbReference>
<dbReference type="InterPro" id="IPR036052">
    <property type="entry name" value="TrpB-like_PALP_sf"/>
</dbReference>
<dbReference type="NCBIfam" id="TIGR00260">
    <property type="entry name" value="thrC"/>
    <property type="match status" value="1"/>
</dbReference>
<dbReference type="PANTHER" id="PTHR43515">
    <property type="entry name" value="THREONINE SYNTHASE-LIKE 1"/>
    <property type="match status" value="1"/>
</dbReference>
<dbReference type="PANTHER" id="PTHR43515:SF1">
    <property type="entry name" value="THREONINE SYNTHASE-LIKE 1"/>
    <property type="match status" value="1"/>
</dbReference>
<dbReference type="Pfam" id="PF00291">
    <property type="entry name" value="PALP"/>
    <property type="match status" value="1"/>
</dbReference>
<dbReference type="SUPFAM" id="SSF53686">
    <property type="entry name" value="Tryptophan synthase beta subunit-like PLP-dependent enzymes"/>
    <property type="match status" value="1"/>
</dbReference>
<dbReference type="PROSITE" id="PS00165">
    <property type="entry name" value="DEHYDRATASE_SER_THR"/>
    <property type="match status" value="1"/>
</dbReference>
<reference key="1">
    <citation type="journal article" date="1999" name="Nature">
        <title>Genomic sequence comparison of two unrelated isolates of the human gastric pathogen Helicobacter pylori.</title>
        <authorList>
            <person name="Alm R.A."/>
            <person name="Ling L.-S.L."/>
            <person name="Moir D.T."/>
            <person name="King B.L."/>
            <person name="Brown E.D."/>
            <person name="Doig P.C."/>
            <person name="Smith D.R."/>
            <person name="Noonan B."/>
            <person name="Guild B.C."/>
            <person name="deJonge B.L."/>
            <person name="Carmel G."/>
            <person name="Tummino P.J."/>
            <person name="Caruso A."/>
            <person name="Uria-Nickelsen M."/>
            <person name="Mills D.M."/>
            <person name="Ives C."/>
            <person name="Gibson R."/>
            <person name="Merberg D."/>
            <person name="Mills S.D."/>
            <person name="Jiang Q."/>
            <person name="Taylor D.E."/>
            <person name="Vovis G.F."/>
            <person name="Trust T.J."/>
        </authorList>
    </citation>
    <scope>NUCLEOTIDE SEQUENCE [LARGE SCALE GENOMIC DNA]</scope>
    <source>
        <strain>J99 / ATCC 700824</strain>
    </source>
</reference>
<name>THRC_HELPJ</name>
<feature type="chain" id="PRO_0000185634" description="Threonine synthase">
    <location>
        <begin position="1"/>
        <end position="486"/>
    </location>
</feature>
<feature type="modified residue" description="N6-(pyridoxal phosphate)lysine" evidence="1">
    <location>
        <position position="109"/>
    </location>
</feature>
<comment type="function">
    <text evidence="1">Catalyzes the gamma-elimination of phosphate from L-phosphohomoserine and the beta-addition of water to produce L-threonine.</text>
</comment>
<comment type="catalytic activity">
    <reaction>
        <text>O-phospho-L-homoserine + H2O = L-threonine + phosphate</text>
        <dbReference type="Rhea" id="RHEA:10840"/>
        <dbReference type="ChEBI" id="CHEBI:15377"/>
        <dbReference type="ChEBI" id="CHEBI:43474"/>
        <dbReference type="ChEBI" id="CHEBI:57590"/>
        <dbReference type="ChEBI" id="CHEBI:57926"/>
        <dbReference type="EC" id="4.2.3.1"/>
    </reaction>
</comment>
<comment type="cofactor">
    <cofactor evidence="1">
        <name>pyridoxal 5'-phosphate</name>
        <dbReference type="ChEBI" id="CHEBI:597326"/>
    </cofactor>
</comment>
<comment type="pathway">
    <text>Amino-acid biosynthesis; L-threonine biosynthesis; L-threonine from L-aspartate: step 5/5.</text>
</comment>
<comment type="similarity">
    <text evidence="2">Belongs to the threonine synthase family.</text>
</comment>
<keyword id="KW-0028">Amino-acid biosynthesis</keyword>
<keyword id="KW-0456">Lyase</keyword>
<keyword id="KW-0663">Pyridoxal phosphate</keyword>
<keyword id="KW-0791">Threonine biosynthesis</keyword>
<accession>Q9ZMX5</accession>
<organism>
    <name type="scientific">Helicobacter pylori (strain J99 / ATCC 700824)</name>
    <name type="common">Campylobacter pylori J99</name>
    <dbReference type="NCBI Taxonomy" id="85963"/>
    <lineage>
        <taxon>Bacteria</taxon>
        <taxon>Pseudomonadati</taxon>
        <taxon>Campylobacterota</taxon>
        <taxon>Epsilonproteobacteria</taxon>
        <taxon>Campylobacterales</taxon>
        <taxon>Helicobacteraceae</taxon>
        <taxon>Helicobacter</taxon>
    </lineage>
</organism>
<evidence type="ECO:0000250" key="1"/>
<evidence type="ECO:0000305" key="2"/>